<reference key="1">
    <citation type="submission" date="2007-12" db="EMBL/GenBank/DDBJ databases">
        <authorList>
            <consortium name="NIH - Xenopus Gene Collection (XGC) project"/>
        </authorList>
    </citation>
    <scope>NUCLEOTIDE SEQUENCE [LARGE SCALE MRNA]</scope>
    <source>
        <tissue>Embryo</tissue>
    </source>
</reference>
<feature type="chain" id="PRO_0000330837" description="Biogenesis of lysosome-related organelles complex 1 subunit 5">
    <location>
        <begin position="1"/>
        <end position="185"/>
    </location>
</feature>
<feature type="region of interest" description="Disordered" evidence="3">
    <location>
        <begin position="1"/>
        <end position="24"/>
    </location>
</feature>
<feature type="coiled-coil region" evidence="2">
    <location>
        <begin position="98"/>
        <end position="182"/>
    </location>
</feature>
<feature type="compositionally biased region" description="Polar residues" evidence="3">
    <location>
        <begin position="1"/>
        <end position="16"/>
    </location>
</feature>
<name>BL1S5_XENTR</name>
<sequence>MSSSNSPVKSTGSPFIQSLKPRDNLASMGSSTQLIIKDIGEIHSRLLDHRPVIQGETRYFIKEFEEKRGLREMRVLENLRNSISETNEHDLPKCTDVMQDQLASVLKKLETANHTIHRLQQRELETAKEIASRAGDQMMRAHWEPFMKEQEQRRRTVDEEHRKAVMRLKDQYVTMEKELSKQISF</sequence>
<protein>
    <recommendedName>
        <fullName>Biogenesis of lysosome-related organelles complex 1 subunit 5</fullName>
        <shortName>BLOC-1 subunit 5</shortName>
    </recommendedName>
    <alternativeName>
        <fullName>Protein Muted homolog</fullName>
    </alternativeName>
</protein>
<keyword id="KW-0175">Coiled coil</keyword>
<keyword id="KW-1185">Reference proteome</keyword>
<gene>
    <name type="primary">bloc1s5</name>
    <name type="synonym">muted</name>
</gene>
<accession>A9ULR1</accession>
<dbReference type="EMBL" id="BC157360">
    <property type="protein sequence ID" value="AAI57361.1"/>
    <property type="molecule type" value="mRNA"/>
</dbReference>
<dbReference type="RefSeq" id="NP_001107140.1">
    <property type="nucleotide sequence ID" value="NM_001113668.1"/>
</dbReference>
<dbReference type="SMR" id="A9ULR1"/>
<dbReference type="FunCoup" id="A9ULR1">
    <property type="interactions" value="860"/>
</dbReference>
<dbReference type="STRING" id="8364.ENSXETP00000002289"/>
<dbReference type="GeneID" id="100101667"/>
<dbReference type="KEGG" id="xtr:100101667"/>
<dbReference type="AGR" id="Xenbase:XB-GENE-919985"/>
<dbReference type="CTD" id="63915"/>
<dbReference type="Xenbase" id="XB-GENE-919985">
    <property type="gene designation" value="bloc1s5"/>
</dbReference>
<dbReference type="InParanoid" id="A9ULR1"/>
<dbReference type="OMA" id="MHGNLNE"/>
<dbReference type="OrthoDB" id="18964at2759"/>
<dbReference type="Proteomes" id="UP000008143">
    <property type="component" value="Chromosome 6"/>
</dbReference>
<dbReference type="GO" id="GO:0031083">
    <property type="term" value="C:BLOC-1 complex"/>
    <property type="evidence" value="ECO:0007669"/>
    <property type="project" value="InterPro"/>
</dbReference>
<dbReference type="GO" id="GO:0030133">
    <property type="term" value="C:transport vesicle"/>
    <property type="evidence" value="ECO:0007669"/>
    <property type="project" value="InterPro"/>
</dbReference>
<dbReference type="InterPro" id="IPR017243">
    <property type="entry name" value="Bloc1s5"/>
</dbReference>
<dbReference type="PANTHER" id="PTHR31784">
    <property type="entry name" value="BIOGENESIS OF LYSOSOME-RELATED ORGANELLES COMPLEX 1 SUBUNIT 5"/>
    <property type="match status" value="1"/>
</dbReference>
<dbReference type="PANTHER" id="PTHR31784:SF2">
    <property type="entry name" value="BIOGENESIS OF LYSOSOME-RELATED ORGANELLES COMPLEX 1 SUBUNIT 5"/>
    <property type="match status" value="1"/>
</dbReference>
<dbReference type="Pfam" id="PF14942">
    <property type="entry name" value="Muted"/>
    <property type="match status" value="1"/>
</dbReference>
<dbReference type="PIRSF" id="PIRSF037610">
    <property type="entry name" value="BLOC-1_complex_muted_subunit"/>
    <property type="match status" value="1"/>
</dbReference>
<evidence type="ECO:0000250" key="1"/>
<evidence type="ECO:0000255" key="2"/>
<evidence type="ECO:0000256" key="3">
    <source>
        <dbReference type="SAM" id="MobiDB-lite"/>
    </source>
</evidence>
<evidence type="ECO:0000305" key="4"/>
<organism>
    <name type="scientific">Xenopus tropicalis</name>
    <name type="common">Western clawed frog</name>
    <name type="synonym">Silurana tropicalis</name>
    <dbReference type="NCBI Taxonomy" id="8364"/>
    <lineage>
        <taxon>Eukaryota</taxon>
        <taxon>Metazoa</taxon>
        <taxon>Chordata</taxon>
        <taxon>Craniata</taxon>
        <taxon>Vertebrata</taxon>
        <taxon>Euteleostomi</taxon>
        <taxon>Amphibia</taxon>
        <taxon>Batrachia</taxon>
        <taxon>Anura</taxon>
        <taxon>Pipoidea</taxon>
        <taxon>Pipidae</taxon>
        <taxon>Xenopodinae</taxon>
        <taxon>Xenopus</taxon>
        <taxon>Silurana</taxon>
    </lineage>
</organism>
<comment type="function">
    <text evidence="1">Component of the BLOC-1 complex, a complex that is required for normal biogenesis of lysosome-related organelles (LRO), such as platelet dense granules and melanosomes. Plays a role in intracellular vesicle trafficking (By similarity).</text>
</comment>
<comment type="subunit">
    <text evidence="1">Component of the biogenesis of lysosome-related organelles complex 1 (BLOC-1).</text>
</comment>
<comment type="similarity">
    <text evidence="4">Belongs to the BLOC1S5 family.</text>
</comment>
<proteinExistence type="evidence at transcript level"/>